<evidence type="ECO:0000255" key="1">
    <source>
        <dbReference type="PROSITE-ProRule" id="PRU00125"/>
    </source>
</evidence>
<evidence type="ECO:0000255" key="2">
    <source>
        <dbReference type="PROSITE-ProRule" id="PRU00172"/>
    </source>
</evidence>
<evidence type="ECO:0000255" key="3">
    <source>
        <dbReference type="PROSITE-ProRule" id="PRU00226"/>
    </source>
</evidence>
<evidence type="ECO:0000256" key="4">
    <source>
        <dbReference type="SAM" id="MobiDB-lite"/>
    </source>
</evidence>
<evidence type="ECO:0000269" key="5">
    <source>
    </source>
</evidence>
<evidence type="ECO:0000269" key="6">
    <source>
    </source>
</evidence>
<evidence type="ECO:0000305" key="7"/>
<organism>
    <name type="scientific">Schizosaccharomyces pombe (strain 972 / ATCC 24843)</name>
    <name type="common">Fission yeast</name>
    <dbReference type="NCBI Taxonomy" id="284812"/>
    <lineage>
        <taxon>Eukaryota</taxon>
        <taxon>Fungi</taxon>
        <taxon>Dikarya</taxon>
        <taxon>Ascomycota</taxon>
        <taxon>Taphrinomycotina</taxon>
        <taxon>Schizosaccharomycetes</taxon>
        <taxon>Schizosaccharomycetales</taxon>
        <taxon>Schizosaccharomycetaceae</taxon>
        <taxon>Schizosaccharomyces</taxon>
    </lineage>
</organism>
<feature type="chain" id="PRO_0000075901" description="Probable Rho-type GTPase-activating protein 3">
    <location>
        <begin position="1"/>
        <end position="969"/>
    </location>
</feature>
<feature type="domain" description="LIM zinc-binding 1" evidence="1">
    <location>
        <begin position="17"/>
        <end position="81"/>
    </location>
</feature>
<feature type="domain" description="LIM zinc-binding 2" evidence="1">
    <location>
        <begin position="76"/>
        <end position="135"/>
    </location>
</feature>
<feature type="domain" description="Rho-GAP" evidence="2">
    <location>
        <begin position="780"/>
        <end position="966"/>
    </location>
</feature>
<feature type="zinc finger region" description="Phorbol-ester/DAG-type" evidence="3">
    <location>
        <begin position="697"/>
        <end position="744"/>
    </location>
</feature>
<feature type="region of interest" description="Disordered" evidence="4">
    <location>
        <begin position="170"/>
        <end position="223"/>
    </location>
</feature>
<feature type="region of interest" description="Disordered" evidence="4">
    <location>
        <begin position="348"/>
        <end position="459"/>
    </location>
</feature>
<feature type="region of interest" description="Disordered" evidence="4">
    <location>
        <begin position="613"/>
        <end position="646"/>
    </location>
</feature>
<feature type="compositionally biased region" description="Polar residues" evidence="4">
    <location>
        <begin position="193"/>
        <end position="202"/>
    </location>
</feature>
<feature type="compositionally biased region" description="Low complexity" evidence="4">
    <location>
        <begin position="212"/>
        <end position="223"/>
    </location>
</feature>
<feature type="compositionally biased region" description="Low complexity" evidence="4">
    <location>
        <begin position="350"/>
        <end position="361"/>
    </location>
</feature>
<feature type="compositionally biased region" description="Polar residues" evidence="4">
    <location>
        <begin position="369"/>
        <end position="392"/>
    </location>
</feature>
<feature type="compositionally biased region" description="Polar residues" evidence="4">
    <location>
        <begin position="418"/>
        <end position="432"/>
    </location>
</feature>
<feature type="compositionally biased region" description="Basic and acidic residues" evidence="4">
    <location>
        <begin position="450"/>
        <end position="459"/>
    </location>
</feature>
<feature type="compositionally biased region" description="Low complexity" evidence="4">
    <location>
        <begin position="613"/>
        <end position="623"/>
    </location>
</feature>
<feature type="compositionally biased region" description="Polar residues" evidence="4">
    <location>
        <begin position="624"/>
        <end position="637"/>
    </location>
</feature>
<feature type="site" description="Arginine finger; crucial for GTP hydrolysis by stabilizing the transition state" evidence="2">
    <location>
        <position position="816"/>
    </location>
</feature>
<name>RGA3_SCHPO</name>
<comment type="function">
    <text evidence="7">GTPase-activating protein for Rho-type proteins.</text>
</comment>
<comment type="subunit">
    <text evidence="6">Interacts with dil1.</text>
</comment>
<comment type="subcellular location">
    <subcellularLocation>
        <location evidence="5">Cell tip</location>
    </subcellularLocation>
    <text evidence="5">Cell poles and division site.</text>
</comment>
<reference key="1">
    <citation type="journal article" date="2002" name="Nature">
        <title>The genome sequence of Schizosaccharomyces pombe.</title>
        <authorList>
            <person name="Wood V."/>
            <person name="Gwilliam R."/>
            <person name="Rajandream M.A."/>
            <person name="Lyne M.H."/>
            <person name="Lyne R."/>
            <person name="Stewart A."/>
            <person name="Sgouros J.G."/>
            <person name="Peat N."/>
            <person name="Hayles J."/>
            <person name="Baker S.G."/>
            <person name="Basham D."/>
            <person name="Bowman S."/>
            <person name="Brooks K."/>
            <person name="Brown D."/>
            <person name="Brown S."/>
            <person name="Chillingworth T."/>
            <person name="Churcher C.M."/>
            <person name="Collins M."/>
            <person name="Connor R."/>
            <person name="Cronin A."/>
            <person name="Davis P."/>
            <person name="Feltwell T."/>
            <person name="Fraser A."/>
            <person name="Gentles S."/>
            <person name="Goble A."/>
            <person name="Hamlin N."/>
            <person name="Harris D.E."/>
            <person name="Hidalgo J."/>
            <person name="Hodgson G."/>
            <person name="Holroyd S."/>
            <person name="Hornsby T."/>
            <person name="Howarth S."/>
            <person name="Huckle E.J."/>
            <person name="Hunt S."/>
            <person name="Jagels K."/>
            <person name="James K.D."/>
            <person name="Jones L."/>
            <person name="Jones M."/>
            <person name="Leather S."/>
            <person name="McDonald S."/>
            <person name="McLean J."/>
            <person name="Mooney P."/>
            <person name="Moule S."/>
            <person name="Mungall K.L."/>
            <person name="Murphy L.D."/>
            <person name="Niblett D."/>
            <person name="Odell C."/>
            <person name="Oliver K."/>
            <person name="O'Neil S."/>
            <person name="Pearson D."/>
            <person name="Quail M.A."/>
            <person name="Rabbinowitsch E."/>
            <person name="Rutherford K.M."/>
            <person name="Rutter S."/>
            <person name="Saunders D."/>
            <person name="Seeger K."/>
            <person name="Sharp S."/>
            <person name="Skelton J."/>
            <person name="Simmonds M.N."/>
            <person name="Squares R."/>
            <person name="Squares S."/>
            <person name="Stevens K."/>
            <person name="Taylor K."/>
            <person name="Taylor R.G."/>
            <person name="Tivey A."/>
            <person name="Walsh S.V."/>
            <person name="Warren T."/>
            <person name="Whitehead S."/>
            <person name="Woodward J.R."/>
            <person name="Volckaert G."/>
            <person name="Aert R."/>
            <person name="Robben J."/>
            <person name="Grymonprez B."/>
            <person name="Weltjens I."/>
            <person name="Vanstreels E."/>
            <person name="Rieger M."/>
            <person name="Schaefer M."/>
            <person name="Mueller-Auer S."/>
            <person name="Gabel C."/>
            <person name="Fuchs M."/>
            <person name="Duesterhoeft A."/>
            <person name="Fritzc C."/>
            <person name="Holzer E."/>
            <person name="Moestl D."/>
            <person name="Hilbert H."/>
            <person name="Borzym K."/>
            <person name="Langer I."/>
            <person name="Beck A."/>
            <person name="Lehrach H."/>
            <person name="Reinhardt R."/>
            <person name="Pohl T.M."/>
            <person name="Eger P."/>
            <person name="Zimmermann W."/>
            <person name="Wedler H."/>
            <person name="Wambutt R."/>
            <person name="Purnelle B."/>
            <person name="Goffeau A."/>
            <person name="Cadieu E."/>
            <person name="Dreano S."/>
            <person name="Gloux S."/>
            <person name="Lelaure V."/>
            <person name="Mottier S."/>
            <person name="Galibert F."/>
            <person name="Aves S.J."/>
            <person name="Xiang Z."/>
            <person name="Hunt C."/>
            <person name="Moore K."/>
            <person name="Hurst S.M."/>
            <person name="Lucas M."/>
            <person name="Rochet M."/>
            <person name="Gaillardin C."/>
            <person name="Tallada V.A."/>
            <person name="Garzon A."/>
            <person name="Thode G."/>
            <person name="Daga R.R."/>
            <person name="Cruzado L."/>
            <person name="Jimenez J."/>
            <person name="Sanchez M."/>
            <person name="del Rey F."/>
            <person name="Benito J."/>
            <person name="Dominguez A."/>
            <person name="Revuelta J.L."/>
            <person name="Moreno S."/>
            <person name="Armstrong J."/>
            <person name="Forsburg S.L."/>
            <person name="Cerutti L."/>
            <person name="Lowe T."/>
            <person name="McCombie W.R."/>
            <person name="Paulsen I."/>
            <person name="Potashkin J."/>
            <person name="Shpakovski G.V."/>
            <person name="Ussery D."/>
            <person name="Barrell B.G."/>
            <person name="Nurse P."/>
        </authorList>
    </citation>
    <scope>NUCLEOTIDE SEQUENCE [LARGE SCALE GENOMIC DNA]</scope>
    <source>
        <strain>972 / ATCC 24843</strain>
    </source>
</reference>
<reference key="2">
    <citation type="journal article" date="2000" name="Genes Cells">
        <title>Large-scale screening of intracellular protein localization in living fission yeast cells by the use of a GFP-fusion genomic DNA library.</title>
        <authorList>
            <person name="Ding D.-Q."/>
            <person name="Tomita Y."/>
            <person name="Yamamoto A."/>
            <person name="Chikashige Y."/>
            <person name="Haraguchi T."/>
            <person name="Hiraoka Y."/>
        </authorList>
    </citation>
    <scope>NUCLEOTIDE SEQUENCE [LARGE SCALE GENOMIC DNA] OF 461-692</scope>
    <scope>SUBCELLULAR LOCATION</scope>
    <source>
        <strain>ATCC 38364 / 968</strain>
    </source>
</reference>
<reference key="3">
    <citation type="journal article" date="2001" name="Genes Cells">
        <title>Characterization of GTPase-activating proteins for the function of the Rho-family small GTPases in the fission yeast Schizosaccharomyces pombe.</title>
        <authorList>
            <person name="Nakano K."/>
            <person name="Mutoh T."/>
            <person name="Mabuchi I."/>
        </authorList>
    </citation>
    <scope>GENE NAME</scope>
</reference>
<reference key="4">
    <citation type="journal article" date="2010" name="Cell Cycle">
        <title>High-throughput knockout screen in Schizosaccharomyces pombe identifies a novel gene required for efficient homolog disjunction during meiosis I.</title>
        <authorList>
            <person name="Rumpf C."/>
            <person name="Cipak L."/>
            <person name="Novatchkova M."/>
            <person name="Li Z."/>
            <person name="Polakova S."/>
            <person name="Dudas A."/>
            <person name="Kovacikova I."/>
            <person name="Miadokova E."/>
            <person name="Ammerer G."/>
            <person name="Gregan J."/>
        </authorList>
    </citation>
    <scope>IDENTIFICATION BY MASS SPECTROMETRY</scope>
    <scope>INTERACTION WITH DIL1</scope>
</reference>
<sequence length="969" mass="108649">MIFRKSISKSPSSKGSTVCFRCGQAFQRRETPISFGGHMWHKDCFCCTKCDKGLEHSDQMLVQTSDGRPVCSSCAHTCTACRMRIKDYALMSGYDSYHRECFRCHDCRKQIIDSNFKRDNRTIFCNDCKQVRHPSRSSDESADYHNFEVDVTIKPTETKSSVESNKSLSIEIMSPQKPPLSPFGGSRDRLVSETPTNMSQAEGGNVPNDGQDSNLASNSADSLLPSAKNRSFSSFTSFESPMKYDDSFFPISPSISPLQKVNKQQQIESPTATFPLSKNTWKNRFHTFHKQSFTPVNDSSSSDSLKPTINEEALDDFAGSASPYKTMSLTDRAEPIVMNGHMRSLHNATSPFRPFSPSYRSSDTHSPRTRSPNVQTHKKTSSQPSDLSSFAQLLSPPQVLSPKPNGGGHKSFRHSHSLSETSQQTLVPSLGSNGEYHLPTNDHSSTPAQSERDSDVEELREQLENLTALTKKLSERLSSSTFDNSKFIRTEDKDTVRSAKLEICEKFFSFADVTDDPTLKDPKHQDLVAAANAYMAMLRESYGTEINNLLERRNELLDDYNNVQKILNESLEASVHLNTKNLELADLNNNLVKQIQHRVPPENQSNLEHTITTSSKNTTSSINPLTAVSSNSGQSSGRPGPLSPNLNVTTRIDIKGKKGSMHLQPRDVNRKVPFKSMHTKSKSADPVVGNEDRTQCDHVFHVNAIFKPSRCYICSESVWGSELRCFHCSISCHSRCLKRLFAESEHEKTMSETVSENSKWMPEMPTRMPPPGPSPTMFGRSLENQLKIEGSVLPQVIAMCVSCVDAHGLEVEGIYRISGSASQVRVLVDEFENGSIRMEHLTSDLFACTSVLKTYLHRLPEPVIPGTQYEELLEAEKIEKEEEKIERVVEVMKTLHPAHLSVFRFLIAHLGRVCKHAEKNLMNSKNVSTVFAPTLMRDKVNRFDLQHATKKSTALQFMLDNVDKILHNL</sequence>
<keyword id="KW-0343">GTPase activation</keyword>
<keyword id="KW-0440">LIM domain</keyword>
<keyword id="KW-0479">Metal-binding</keyword>
<keyword id="KW-1185">Reference proteome</keyword>
<keyword id="KW-0677">Repeat</keyword>
<keyword id="KW-0862">Zinc</keyword>
<keyword id="KW-0863">Zinc-finger</keyword>
<accession>O14014</accession>
<accession>Q9USB8</accession>
<gene>
    <name type="primary">rga3</name>
    <name type="ORF">SPAC29A4.11</name>
</gene>
<proteinExistence type="evidence at protein level"/>
<protein>
    <recommendedName>
        <fullName>Probable Rho-type GTPase-activating protein 3</fullName>
    </recommendedName>
</protein>
<dbReference type="EMBL" id="CU329670">
    <property type="protein sequence ID" value="CAB10138.1"/>
    <property type="molecule type" value="Genomic_DNA"/>
</dbReference>
<dbReference type="EMBL" id="AB027887">
    <property type="protein sequence ID" value="BAA87191.1"/>
    <property type="molecule type" value="Genomic_DNA"/>
</dbReference>
<dbReference type="PIR" id="T38478">
    <property type="entry name" value="T38478"/>
</dbReference>
<dbReference type="RefSeq" id="NP_594871.1">
    <property type="nucleotide sequence ID" value="NM_001020300.2"/>
</dbReference>
<dbReference type="SMR" id="O14014"/>
<dbReference type="BioGRID" id="278773">
    <property type="interactions" value="59"/>
</dbReference>
<dbReference type="FunCoup" id="O14014">
    <property type="interactions" value="397"/>
</dbReference>
<dbReference type="STRING" id="284812.O14014"/>
<dbReference type="iPTMnet" id="O14014"/>
<dbReference type="PaxDb" id="4896-SPAC29A4.11.1"/>
<dbReference type="EnsemblFungi" id="SPAC29A4.11.1">
    <property type="protein sequence ID" value="SPAC29A4.11.1:pep"/>
    <property type="gene ID" value="SPAC29A4.11"/>
</dbReference>
<dbReference type="GeneID" id="2542306"/>
<dbReference type="KEGG" id="spo:2542306"/>
<dbReference type="PomBase" id="SPAC29A4.11">
    <property type="gene designation" value="rga3"/>
</dbReference>
<dbReference type="VEuPathDB" id="FungiDB:SPAC29A4.11"/>
<dbReference type="eggNOG" id="KOG1453">
    <property type="taxonomic scope" value="Eukaryota"/>
</dbReference>
<dbReference type="eggNOG" id="KOG1704">
    <property type="taxonomic scope" value="Eukaryota"/>
</dbReference>
<dbReference type="HOGENOM" id="CLU_309526_0_0_1"/>
<dbReference type="InParanoid" id="O14014"/>
<dbReference type="OMA" id="RYAKTKR"/>
<dbReference type="PhylomeDB" id="O14014"/>
<dbReference type="Reactome" id="R-SPO-9013148">
    <property type="pathway name" value="CDC42 GTPase cycle"/>
</dbReference>
<dbReference type="Reactome" id="R-SPO-9013405">
    <property type="pathway name" value="RHOD GTPase cycle"/>
</dbReference>
<dbReference type="Reactome" id="R-SPO-9013424">
    <property type="pathway name" value="RHOV GTPase cycle"/>
</dbReference>
<dbReference type="Reactome" id="R-SPO-9035034">
    <property type="pathway name" value="RHOF GTPase cycle"/>
</dbReference>
<dbReference type="PRO" id="PR:O14014"/>
<dbReference type="Proteomes" id="UP000002485">
    <property type="component" value="Chromosome I"/>
</dbReference>
<dbReference type="GO" id="GO:0005938">
    <property type="term" value="C:cell cortex"/>
    <property type="evidence" value="ECO:0000318"/>
    <property type="project" value="GO_Central"/>
</dbReference>
<dbReference type="GO" id="GO:0051285">
    <property type="term" value="C:cell cortex of cell tip"/>
    <property type="evidence" value="ECO:0007005"/>
    <property type="project" value="PomBase"/>
</dbReference>
<dbReference type="GO" id="GO:0032153">
    <property type="term" value="C:cell division site"/>
    <property type="evidence" value="ECO:0000314"/>
    <property type="project" value="PomBase"/>
</dbReference>
<dbReference type="GO" id="GO:0051286">
    <property type="term" value="C:cell tip"/>
    <property type="evidence" value="ECO:0007005"/>
    <property type="project" value="PomBase"/>
</dbReference>
<dbReference type="GO" id="GO:0090726">
    <property type="term" value="C:cortical dynamic polarity patch"/>
    <property type="evidence" value="ECO:0000314"/>
    <property type="project" value="PomBase"/>
</dbReference>
<dbReference type="GO" id="GO:0005829">
    <property type="term" value="C:cytosol"/>
    <property type="evidence" value="ECO:0007005"/>
    <property type="project" value="PomBase"/>
</dbReference>
<dbReference type="GO" id="GO:0035838">
    <property type="term" value="C:growing cell tip"/>
    <property type="evidence" value="ECO:0000314"/>
    <property type="project" value="PomBase"/>
</dbReference>
<dbReference type="GO" id="GO:0005886">
    <property type="term" value="C:plasma membrane"/>
    <property type="evidence" value="ECO:0000318"/>
    <property type="project" value="GO_Central"/>
</dbReference>
<dbReference type="GO" id="GO:0030427">
    <property type="term" value="C:site of polarized growth"/>
    <property type="evidence" value="ECO:0000318"/>
    <property type="project" value="GO_Central"/>
</dbReference>
<dbReference type="GO" id="GO:0005096">
    <property type="term" value="F:GTPase activator activity"/>
    <property type="evidence" value="ECO:0000314"/>
    <property type="project" value="PomBase"/>
</dbReference>
<dbReference type="GO" id="GO:0031267">
    <property type="term" value="F:small GTPase binding"/>
    <property type="evidence" value="ECO:0000353"/>
    <property type="project" value="PomBase"/>
</dbReference>
<dbReference type="GO" id="GO:0008270">
    <property type="term" value="F:zinc ion binding"/>
    <property type="evidence" value="ECO:0007669"/>
    <property type="project" value="UniProtKB-KW"/>
</dbReference>
<dbReference type="GO" id="GO:0007264">
    <property type="term" value="P:small GTPase-mediated signal transduction"/>
    <property type="evidence" value="ECO:0000318"/>
    <property type="project" value="GO_Central"/>
</dbReference>
<dbReference type="CDD" id="cd00029">
    <property type="entry name" value="C1"/>
    <property type="match status" value="1"/>
</dbReference>
<dbReference type="CDD" id="cd08368">
    <property type="entry name" value="LIM"/>
    <property type="match status" value="2"/>
</dbReference>
<dbReference type="CDD" id="cd00159">
    <property type="entry name" value="RhoGAP"/>
    <property type="match status" value="1"/>
</dbReference>
<dbReference type="Gene3D" id="3.30.60.20">
    <property type="match status" value="1"/>
</dbReference>
<dbReference type="Gene3D" id="2.10.110.10">
    <property type="entry name" value="Cysteine Rich Protein"/>
    <property type="match status" value="2"/>
</dbReference>
<dbReference type="Gene3D" id="1.10.555.10">
    <property type="entry name" value="Rho GTPase activation protein"/>
    <property type="match status" value="1"/>
</dbReference>
<dbReference type="InterPro" id="IPR046349">
    <property type="entry name" value="C1-like_sf"/>
</dbReference>
<dbReference type="InterPro" id="IPR002219">
    <property type="entry name" value="PE/DAG-bd"/>
</dbReference>
<dbReference type="InterPro" id="IPR051854">
    <property type="entry name" value="Rho-type_GAP"/>
</dbReference>
<dbReference type="InterPro" id="IPR008936">
    <property type="entry name" value="Rho_GTPase_activation_prot"/>
</dbReference>
<dbReference type="InterPro" id="IPR000198">
    <property type="entry name" value="RhoGAP_dom"/>
</dbReference>
<dbReference type="InterPro" id="IPR001781">
    <property type="entry name" value="Znf_LIM"/>
</dbReference>
<dbReference type="PANTHER" id="PTHR46075">
    <property type="entry name" value="CHIMERIN FAMILY MEMBER"/>
    <property type="match status" value="1"/>
</dbReference>
<dbReference type="PANTHER" id="PTHR46075:SF2">
    <property type="entry name" value="RHO GTPASE ACTIVATING PROTEIN AT 5A, ISOFORM A"/>
    <property type="match status" value="1"/>
</dbReference>
<dbReference type="Pfam" id="PF00412">
    <property type="entry name" value="LIM"/>
    <property type="match status" value="2"/>
</dbReference>
<dbReference type="Pfam" id="PF00620">
    <property type="entry name" value="RhoGAP"/>
    <property type="match status" value="1"/>
</dbReference>
<dbReference type="SMART" id="SM00109">
    <property type="entry name" value="C1"/>
    <property type="match status" value="1"/>
</dbReference>
<dbReference type="SMART" id="SM00132">
    <property type="entry name" value="LIM"/>
    <property type="match status" value="2"/>
</dbReference>
<dbReference type="SMART" id="SM00324">
    <property type="entry name" value="RhoGAP"/>
    <property type="match status" value="1"/>
</dbReference>
<dbReference type="SUPFAM" id="SSF57889">
    <property type="entry name" value="Cysteine-rich domain"/>
    <property type="match status" value="1"/>
</dbReference>
<dbReference type="SUPFAM" id="SSF48350">
    <property type="entry name" value="GTPase activation domain, GAP"/>
    <property type="match status" value="1"/>
</dbReference>
<dbReference type="PROSITE" id="PS00478">
    <property type="entry name" value="LIM_DOMAIN_1"/>
    <property type="match status" value="2"/>
</dbReference>
<dbReference type="PROSITE" id="PS50023">
    <property type="entry name" value="LIM_DOMAIN_2"/>
    <property type="match status" value="2"/>
</dbReference>
<dbReference type="PROSITE" id="PS50238">
    <property type="entry name" value="RHOGAP"/>
    <property type="match status" value="1"/>
</dbReference>
<dbReference type="PROSITE" id="PS50081">
    <property type="entry name" value="ZF_DAG_PE_2"/>
    <property type="match status" value="1"/>
</dbReference>